<accession>Q59646</accession>
<gene>
    <name type="primary">norC</name>
    <name type="ordered locus">PA0523</name>
</gene>
<comment type="function">
    <text>Component of the anaerobic respiratory chain that transforms nitrate to dinitrogen (denitrification).</text>
</comment>
<comment type="subunit">
    <text>Heterodimer of cytochromes b (large subunit) and c (small subunit).</text>
</comment>
<comment type="subcellular location">
    <subcellularLocation>
        <location>Cell membrane</location>
        <topology>Single-pass membrane protein</topology>
    </subcellularLocation>
    <text>May be attached to the membrane by a signal-anchor.</text>
</comment>
<comment type="induction">
    <text evidence="4">By nitric oxide.</text>
</comment>
<protein>
    <recommendedName>
        <fullName>Nitric oxide reductase subunit C</fullName>
    </recommendedName>
    <alternativeName>
        <fullName>NOR small subunit</fullName>
    </alternativeName>
    <alternativeName>
        <fullName>Nitric oxide reductase cytochrome c subunit</fullName>
    </alternativeName>
</protein>
<name>NORC_PSEAE</name>
<reference key="1">
    <citation type="journal article" date="1995" name="Biochim. Biophys. Acta">
        <title>The structural genes for nitric oxide reductase from Pseudomonas aeruginosa.</title>
        <authorList>
            <person name="Arai H."/>
            <person name="Igarashi Y."/>
            <person name="Kodama T."/>
        </authorList>
    </citation>
    <scope>NUCLEOTIDE SEQUENCE [GENOMIC DNA]</scope>
    <source>
        <strain>ATCC 15692 / DSM 22644 / CIP 104116 / JCM 14847 / LMG 12228 / 1C / PRS 101 / PAO1</strain>
    </source>
</reference>
<reference key="2">
    <citation type="journal article" date="2000" name="Nature">
        <title>Complete genome sequence of Pseudomonas aeruginosa PAO1, an opportunistic pathogen.</title>
        <authorList>
            <person name="Stover C.K."/>
            <person name="Pham X.-Q.T."/>
            <person name="Erwin A.L."/>
            <person name="Mizoguchi S.D."/>
            <person name="Warrener P."/>
            <person name="Hickey M.J."/>
            <person name="Brinkman F.S.L."/>
            <person name="Hufnagle W.O."/>
            <person name="Kowalik D.J."/>
            <person name="Lagrou M."/>
            <person name="Garber R.L."/>
            <person name="Goltry L."/>
            <person name="Tolentino E."/>
            <person name="Westbrock-Wadman S."/>
            <person name="Yuan Y."/>
            <person name="Brody L.L."/>
            <person name="Coulter S.N."/>
            <person name="Folger K.R."/>
            <person name="Kas A."/>
            <person name="Larbig K."/>
            <person name="Lim R.M."/>
            <person name="Smith K.A."/>
            <person name="Spencer D.H."/>
            <person name="Wong G.K.-S."/>
            <person name="Wu Z."/>
            <person name="Paulsen I.T."/>
            <person name="Reizer J."/>
            <person name="Saier M.H. Jr."/>
            <person name="Hancock R.E.W."/>
            <person name="Lory S."/>
            <person name="Olson M.V."/>
        </authorList>
    </citation>
    <scope>NUCLEOTIDE SEQUENCE [LARGE SCALE GENOMIC DNA]</scope>
    <source>
        <strain>ATCC 15692 / DSM 22644 / CIP 104116 / JCM 14847 / LMG 12228 / 1C / PRS 101 / PAO1</strain>
    </source>
</reference>
<sequence length="146" mass="16344">MSETFTKGMARNIYFGGSVFFILLFLALTYHTEKTLPERTNEAAMSAAVVRGKLVWEQNNCVGCHTLLGEGAYFAPELGNVVGRRGGEEGFNTFLQAWMNIQPLNVPGRRAMPQFHLSEGQVDDLAEFLKWSSKIDTNQWPPNKEG</sequence>
<feature type="initiator methionine" description="Removed" evidence="1">
    <location>
        <position position="1"/>
    </location>
</feature>
<feature type="chain" id="PRO_0000108424" description="Nitric oxide reductase subunit C">
    <location>
        <begin position="2"/>
        <end position="146"/>
    </location>
</feature>
<feature type="transmembrane region" description="Helical; Signal-anchor" evidence="2">
    <location>
        <begin position="13"/>
        <end position="29"/>
    </location>
</feature>
<feature type="binding site" description="covalent" evidence="3">
    <location>
        <position position="61"/>
    </location>
    <ligand>
        <name>heme c</name>
        <dbReference type="ChEBI" id="CHEBI:61717"/>
    </ligand>
</feature>
<feature type="binding site" description="covalent" evidence="3">
    <location>
        <position position="64"/>
    </location>
    <ligand>
        <name>heme c</name>
        <dbReference type="ChEBI" id="CHEBI:61717"/>
    </ligand>
</feature>
<feature type="binding site" description="axial binding residue" evidence="3">
    <location>
        <position position="65"/>
    </location>
    <ligand>
        <name>heme c</name>
        <dbReference type="ChEBI" id="CHEBI:61717"/>
    </ligand>
    <ligandPart>
        <name>Fe</name>
        <dbReference type="ChEBI" id="CHEBI:18248"/>
    </ligandPart>
</feature>
<feature type="helix" evidence="6">
    <location>
        <begin position="7"/>
        <end position="39"/>
    </location>
</feature>
<feature type="helix" evidence="6">
    <location>
        <begin position="42"/>
        <end position="44"/>
    </location>
</feature>
<feature type="helix" evidence="6">
    <location>
        <begin position="47"/>
        <end position="58"/>
    </location>
</feature>
<feature type="helix" evidence="6">
    <location>
        <begin position="61"/>
        <end position="63"/>
    </location>
</feature>
<feature type="strand" evidence="5">
    <location>
        <begin position="65"/>
        <end position="67"/>
    </location>
</feature>
<feature type="strand" evidence="6">
    <location>
        <begin position="73"/>
        <end position="75"/>
    </location>
</feature>
<feature type="helix" evidence="6">
    <location>
        <begin position="81"/>
        <end position="83"/>
    </location>
</feature>
<feature type="turn" evidence="6">
    <location>
        <begin position="84"/>
        <end position="86"/>
    </location>
</feature>
<feature type="helix" evidence="6">
    <location>
        <begin position="87"/>
        <end position="100"/>
    </location>
</feature>
<feature type="helix" evidence="6">
    <location>
        <begin position="119"/>
        <end position="132"/>
    </location>
</feature>
<feature type="strand" evidence="6">
    <location>
        <begin position="141"/>
        <end position="143"/>
    </location>
</feature>
<keyword id="KW-0002">3D-structure</keyword>
<keyword id="KW-1003">Cell membrane</keyword>
<keyword id="KW-0249">Electron transport</keyword>
<keyword id="KW-0349">Heme</keyword>
<keyword id="KW-0408">Iron</keyword>
<keyword id="KW-0472">Membrane</keyword>
<keyword id="KW-0479">Metal-binding</keyword>
<keyword id="KW-1185">Reference proteome</keyword>
<keyword id="KW-0679">Respiratory chain</keyword>
<keyword id="KW-0735">Signal-anchor</keyword>
<keyword id="KW-0812">Transmembrane</keyword>
<keyword id="KW-1133">Transmembrane helix</keyword>
<keyword id="KW-0813">Transport</keyword>
<dbReference type="EMBL" id="D38133">
    <property type="protein sequence ID" value="BAA07329.1"/>
    <property type="molecule type" value="Genomic_DNA"/>
</dbReference>
<dbReference type="EMBL" id="AE004091">
    <property type="protein sequence ID" value="AAG03912.1"/>
    <property type="molecule type" value="Genomic_DNA"/>
</dbReference>
<dbReference type="PIR" id="S53712">
    <property type="entry name" value="S53712"/>
</dbReference>
<dbReference type="RefSeq" id="NP_249214.1">
    <property type="nucleotide sequence ID" value="NC_002516.2"/>
</dbReference>
<dbReference type="RefSeq" id="WP_003113238.1">
    <property type="nucleotide sequence ID" value="NZ_QZGE01000010.1"/>
</dbReference>
<dbReference type="PDB" id="3O0R">
    <property type="method" value="X-ray"/>
    <property type="resolution" value="2.70 A"/>
    <property type="chains" value="C=1-146"/>
</dbReference>
<dbReference type="PDB" id="3WFB">
    <property type="method" value="X-ray"/>
    <property type="resolution" value="2.70 A"/>
    <property type="chains" value="C=1-146"/>
</dbReference>
<dbReference type="PDB" id="3WFC">
    <property type="method" value="X-ray"/>
    <property type="resolution" value="2.50 A"/>
    <property type="chains" value="C=1-146"/>
</dbReference>
<dbReference type="PDB" id="3WFD">
    <property type="method" value="X-ray"/>
    <property type="resolution" value="2.30 A"/>
    <property type="chains" value="C=1-146"/>
</dbReference>
<dbReference type="PDB" id="3WFE">
    <property type="method" value="X-ray"/>
    <property type="resolution" value="2.49 A"/>
    <property type="chains" value="C=1-146"/>
</dbReference>
<dbReference type="PDB" id="5GUW">
    <property type="method" value="X-ray"/>
    <property type="resolution" value="3.20 A"/>
    <property type="chains" value="A/C=1-146"/>
</dbReference>
<dbReference type="PDB" id="5GUX">
    <property type="method" value="X-ray"/>
    <property type="resolution" value="3.30 A"/>
    <property type="chains" value="C=1-146"/>
</dbReference>
<dbReference type="PDBsum" id="3O0R"/>
<dbReference type="PDBsum" id="3WFB"/>
<dbReference type="PDBsum" id="3WFC"/>
<dbReference type="PDBsum" id="3WFD"/>
<dbReference type="PDBsum" id="3WFE"/>
<dbReference type="PDBsum" id="5GUW"/>
<dbReference type="PDBsum" id="5GUX"/>
<dbReference type="SMR" id="Q59646"/>
<dbReference type="STRING" id="208964.PA0523"/>
<dbReference type="TCDB" id="3.D.4.10.3">
    <property type="family name" value="the proton-translocating cytochrome oxidase (cox) superfamily"/>
</dbReference>
<dbReference type="PaxDb" id="208964-PA0523"/>
<dbReference type="ABCD" id="Q59646">
    <property type="antibodies" value="1 sequenced antibody"/>
</dbReference>
<dbReference type="DNASU" id="882200"/>
<dbReference type="GeneID" id="882200"/>
<dbReference type="KEGG" id="pae:PA0523"/>
<dbReference type="PATRIC" id="fig|208964.12.peg.553"/>
<dbReference type="PseudoCAP" id="PA0523"/>
<dbReference type="HOGENOM" id="CLU_135564_0_0_6"/>
<dbReference type="InParanoid" id="Q59646"/>
<dbReference type="OrthoDB" id="9809720at2"/>
<dbReference type="PhylomeDB" id="Q59646"/>
<dbReference type="BioCyc" id="PAER208964:G1FZ6-528-MONOMER"/>
<dbReference type="BRENDA" id="1.7.2.5">
    <property type="organism ID" value="5087"/>
</dbReference>
<dbReference type="EvolutionaryTrace" id="Q59646"/>
<dbReference type="Proteomes" id="UP000002438">
    <property type="component" value="Chromosome"/>
</dbReference>
<dbReference type="GO" id="GO:0005886">
    <property type="term" value="C:plasma membrane"/>
    <property type="evidence" value="ECO:0007669"/>
    <property type="project" value="UniProtKB-SubCell"/>
</dbReference>
<dbReference type="GO" id="GO:0009055">
    <property type="term" value="F:electron transfer activity"/>
    <property type="evidence" value="ECO:0007669"/>
    <property type="project" value="InterPro"/>
</dbReference>
<dbReference type="GO" id="GO:0020037">
    <property type="term" value="F:heme binding"/>
    <property type="evidence" value="ECO:0007669"/>
    <property type="project" value="InterPro"/>
</dbReference>
<dbReference type="GO" id="GO:0046872">
    <property type="term" value="F:metal ion binding"/>
    <property type="evidence" value="ECO:0007669"/>
    <property type="project" value="UniProtKB-KW"/>
</dbReference>
<dbReference type="Gene3D" id="1.10.760.10">
    <property type="entry name" value="Cytochrome c-like domain"/>
    <property type="match status" value="1"/>
</dbReference>
<dbReference type="InterPro" id="IPR009056">
    <property type="entry name" value="Cyt_c-like_dom"/>
</dbReference>
<dbReference type="InterPro" id="IPR036909">
    <property type="entry name" value="Cyt_c-like_dom_sf"/>
</dbReference>
<dbReference type="InterPro" id="IPR051811">
    <property type="entry name" value="Cytochrome_c550/c551-like"/>
</dbReference>
<dbReference type="PANTHER" id="PTHR37823">
    <property type="entry name" value="CYTOCHROME C-553-LIKE"/>
    <property type="match status" value="1"/>
</dbReference>
<dbReference type="PANTHER" id="PTHR37823:SF1">
    <property type="entry name" value="CYTOCHROME C-553-LIKE"/>
    <property type="match status" value="1"/>
</dbReference>
<dbReference type="Pfam" id="PF00034">
    <property type="entry name" value="Cytochrom_C"/>
    <property type="match status" value="1"/>
</dbReference>
<dbReference type="SUPFAM" id="SSF46626">
    <property type="entry name" value="Cytochrome c"/>
    <property type="match status" value="1"/>
</dbReference>
<dbReference type="PROSITE" id="PS51007">
    <property type="entry name" value="CYTC"/>
    <property type="match status" value="1"/>
</dbReference>
<evidence type="ECO:0000250" key="1"/>
<evidence type="ECO:0000255" key="2"/>
<evidence type="ECO:0000255" key="3">
    <source>
        <dbReference type="PROSITE-ProRule" id="PRU00433"/>
    </source>
</evidence>
<evidence type="ECO:0000305" key="4"/>
<evidence type="ECO:0007829" key="5">
    <source>
        <dbReference type="PDB" id="3O0R"/>
    </source>
</evidence>
<evidence type="ECO:0007829" key="6">
    <source>
        <dbReference type="PDB" id="3WFD"/>
    </source>
</evidence>
<organism>
    <name type="scientific">Pseudomonas aeruginosa (strain ATCC 15692 / DSM 22644 / CIP 104116 / JCM 14847 / LMG 12228 / 1C / PRS 101 / PAO1)</name>
    <dbReference type="NCBI Taxonomy" id="208964"/>
    <lineage>
        <taxon>Bacteria</taxon>
        <taxon>Pseudomonadati</taxon>
        <taxon>Pseudomonadota</taxon>
        <taxon>Gammaproteobacteria</taxon>
        <taxon>Pseudomonadales</taxon>
        <taxon>Pseudomonadaceae</taxon>
        <taxon>Pseudomonas</taxon>
    </lineage>
</organism>
<proteinExistence type="evidence at protein level"/>